<organism>
    <name type="scientific">Mus musculus</name>
    <name type="common">Mouse</name>
    <dbReference type="NCBI Taxonomy" id="10090"/>
    <lineage>
        <taxon>Eukaryota</taxon>
        <taxon>Metazoa</taxon>
        <taxon>Chordata</taxon>
        <taxon>Craniata</taxon>
        <taxon>Vertebrata</taxon>
        <taxon>Euteleostomi</taxon>
        <taxon>Mammalia</taxon>
        <taxon>Eutheria</taxon>
        <taxon>Euarchontoglires</taxon>
        <taxon>Glires</taxon>
        <taxon>Rodentia</taxon>
        <taxon>Myomorpha</taxon>
        <taxon>Muroidea</taxon>
        <taxon>Muridae</taxon>
        <taxon>Murinae</taxon>
        <taxon>Mus</taxon>
        <taxon>Mus</taxon>
    </lineage>
</organism>
<proteinExistence type="evidence at protein level"/>
<comment type="function">
    <text evidence="2 3 4 5 6">May play an important role in neural organelle transport, and in transduction of nerve signals or in nerve growth (PubMed:12445626, PubMed:16527258, PubMed:16696124, PubMed:9191101). May play a role in neurite extension (PubMed:26430118).</text>
</comment>
<comment type="subcellular location">
    <subcellularLocation>
        <location evidence="7">Membrane</location>
        <topology evidence="7">Multi-pass membrane protein</topology>
    </subcellularLocation>
    <subcellularLocation>
        <location evidence="3">Cell projection</location>
        <location evidence="3">Neuron projection</location>
    </subcellularLocation>
</comment>
<comment type="tissue specificity">
    <text evidence="6">Expressed predominantly in brain. Also weakly expressed in lung and spleen. In brain, expressed strongly in nerve fibers of the cerebral cortex, anterior cerebral nuclei, hypothalamus, amygdaloid complex, brain stem of the metaencephalon and medulla oblongata, and moderately expressed in soma of neurons of the dentate gyrus of the hippocampus and Purkinje cells of the cerebellum.</text>
</comment>
<comment type="developmental stage">
    <text evidence="2 4">Expression is developmentally regulated as axonal fibers innervate, extend collateral fibers and finally attain a stable state. First detected at postnatal day 6 in cell bodies and apical dendrites of pyramidal neurons in the developing cerebral cortex, with expression gradually increasing during postnatal development. In P1 retina, strongly expressed in the optic nerve fiber layer, and weakly expressed in ganglion cells, presumptive amacrine and horizontal cells. At P10, also strongly expressed in other parts of the retina such as the ganglion cells, inner plexiform layer and horizontal cells. Expression decreases as the retina develops further to maturity.</text>
</comment>
<comment type="induction">
    <text evidence="3 5 6">By retinoic acid in neuroblastoma Neuro2a cells. Down-regulated following fear conditioning (at protein level) (PubMed:26430118).</text>
</comment>
<comment type="similarity">
    <text evidence="1">Belongs to the VMP family.</text>
</comment>
<protein>
    <recommendedName>
        <fullName>Neurensin-1</fullName>
    </recommendedName>
    <alternativeName>
        <fullName>Neuro-p24</fullName>
    </alternativeName>
    <alternativeName>
        <fullName>Vesicular membrane protein of 24 kDa</fullName>
        <shortName>Vesicular membrane protein p24</shortName>
    </alternativeName>
</protein>
<evidence type="ECO:0000255" key="1"/>
<evidence type="ECO:0000269" key="2">
    <source>
    </source>
</evidence>
<evidence type="ECO:0000269" key="3">
    <source>
    </source>
</evidence>
<evidence type="ECO:0000269" key="4">
    <source>
    </source>
</evidence>
<evidence type="ECO:0000269" key="5">
    <source>
    </source>
</evidence>
<evidence type="ECO:0000269" key="6">
    <source>
    </source>
</evidence>
<evidence type="ECO:0000305" key="7"/>
<evidence type="ECO:0000312" key="8">
    <source>
        <dbReference type="EMBL" id="AAH52019.1"/>
    </source>
</evidence>
<evidence type="ECO:0000312" key="9">
    <source>
        <dbReference type="EMBL" id="BAA18947.1"/>
    </source>
</evidence>
<evidence type="ECO:0000312" key="10">
    <source>
        <dbReference type="EMBL" id="BAE23574.1"/>
    </source>
</evidence>
<evidence type="ECO:0000312" key="11">
    <source>
        <dbReference type="EMBL" id="BAE32162.1"/>
    </source>
</evidence>
<evidence type="ECO:0000312" key="12">
    <source>
        <dbReference type="MGI" id="MGI:894662"/>
    </source>
</evidence>
<keyword id="KW-0966">Cell projection</keyword>
<keyword id="KW-0472">Membrane</keyword>
<keyword id="KW-1185">Reference proteome</keyword>
<keyword id="KW-0812">Transmembrane</keyword>
<keyword id="KW-1133">Transmembrane helix</keyword>
<name>NRSN1_MOUSE</name>
<reference evidence="7 9" key="1">
    <citation type="journal article" date="1997" name="Brain Res. Mol. Brain Res.">
        <title>A newly identified membrane protein localized exclusively in intracellular organelles of neurons.</title>
        <authorList>
            <person name="Kadota Y."/>
            <person name="Niiya A."/>
            <person name="Masaki R."/>
            <person name="Yamamoto A."/>
            <person name="Araki M."/>
            <person name="Taketani S."/>
        </authorList>
    </citation>
    <scope>NUCLEOTIDE SEQUENCE [MRNA]</scope>
    <scope>FUNCTION</scope>
    <scope>TISSUE SPECIFICITY</scope>
    <scope>INDUCTION</scope>
    <source>
        <strain evidence="9">C57BL/6J</strain>
        <tissue evidence="9">Brain</tissue>
    </source>
</reference>
<reference evidence="10" key="2">
    <citation type="journal article" date="2005" name="Science">
        <title>The transcriptional landscape of the mammalian genome.</title>
        <authorList>
            <person name="Carninci P."/>
            <person name="Kasukawa T."/>
            <person name="Katayama S."/>
            <person name="Gough J."/>
            <person name="Frith M.C."/>
            <person name="Maeda N."/>
            <person name="Oyama R."/>
            <person name="Ravasi T."/>
            <person name="Lenhard B."/>
            <person name="Wells C."/>
            <person name="Kodzius R."/>
            <person name="Shimokawa K."/>
            <person name="Bajic V.B."/>
            <person name="Brenner S.E."/>
            <person name="Batalov S."/>
            <person name="Forrest A.R."/>
            <person name="Zavolan M."/>
            <person name="Davis M.J."/>
            <person name="Wilming L.G."/>
            <person name="Aidinis V."/>
            <person name="Allen J.E."/>
            <person name="Ambesi-Impiombato A."/>
            <person name="Apweiler R."/>
            <person name="Aturaliya R.N."/>
            <person name="Bailey T.L."/>
            <person name="Bansal M."/>
            <person name="Baxter L."/>
            <person name="Beisel K.W."/>
            <person name="Bersano T."/>
            <person name="Bono H."/>
            <person name="Chalk A.M."/>
            <person name="Chiu K.P."/>
            <person name="Choudhary V."/>
            <person name="Christoffels A."/>
            <person name="Clutterbuck D.R."/>
            <person name="Crowe M.L."/>
            <person name="Dalla E."/>
            <person name="Dalrymple B.P."/>
            <person name="de Bono B."/>
            <person name="Della Gatta G."/>
            <person name="di Bernardo D."/>
            <person name="Down T."/>
            <person name="Engstrom P."/>
            <person name="Fagiolini M."/>
            <person name="Faulkner G."/>
            <person name="Fletcher C.F."/>
            <person name="Fukushima T."/>
            <person name="Furuno M."/>
            <person name="Futaki S."/>
            <person name="Gariboldi M."/>
            <person name="Georgii-Hemming P."/>
            <person name="Gingeras T.R."/>
            <person name="Gojobori T."/>
            <person name="Green R.E."/>
            <person name="Gustincich S."/>
            <person name="Harbers M."/>
            <person name="Hayashi Y."/>
            <person name="Hensch T.K."/>
            <person name="Hirokawa N."/>
            <person name="Hill D."/>
            <person name="Huminiecki L."/>
            <person name="Iacono M."/>
            <person name="Ikeo K."/>
            <person name="Iwama A."/>
            <person name="Ishikawa T."/>
            <person name="Jakt M."/>
            <person name="Kanapin A."/>
            <person name="Katoh M."/>
            <person name="Kawasawa Y."/>
            <person name="Kelso J."/>
            <person name="Kitamura H."/>
            <person name="Kitano H."/>
            <person name="Kollias G."/>
            <person name="Krishnan S.P."/>
            <person name="Kruger A."/>
            <person name="Kummerfeld S.K."/>
            <person name="Kurochkin I.V."/>
            <person name="Lareau L.F."/>
            <person name="Lazarevic D."/>
            <person name="Lipovich L."/>
            <person name="Liu J."/>
            <person name="Liuni S."/>
            <person name="McWilliam S."/>
            <person name="Madan Babu M."/>
            <person name="Madera M."/>
            <person name="Marchionni L."/>
            <person name="Matsuda H."/>
            <person name="Matsuzawa S."/>
            <person name="Miki H."/>
            <person name="Mignone F."/>
            <person name="Miyake S."/>
            <person name="Morris K."/>
            <person name="Mottagui-Tabar S."/>
            <person name="Mulder N."/>
            <person name="Nakano N."/>
            <person name="Nakauchi H."/>
            <person name="Ng P."/>
            <person name="Nilsson R."/>
            <person name="Nishiguchi S."/>
            <person name="Nishikawa S."/>
            <person name="Nori F."/>
            <person name="Ohara O."/>
            <person name="Okazaki Y."/>
            <person name="Orlando V."/>
            <person name="Pang K.C."/>
            <person name="Pavan W.J."/>
            <person name="Pavesi G."/>
            <person name="Pesole G."/>
            <person name="Petrovsky N."/>
            <person name="Piazza S."/>
            <person name="Reed J."/>
            <person name="Reid J.F."/>
            <person name="Ring B.Z."/>
            <person name="Ringwald M."/>
            <person name="Rost B."/>
            <person name="Ruan Y."/>
            <person name="Salzberg S.L."/>
            <person name="Sandelin A."/>
            <person name="Schneider C."/>
            <person name="Schoenbach C."/>
            <person name="Sekiguchi K."/>
            <person name="Semple C.A."/>
            <person name="Seno S."/>
            <person name="Sessa L."/>
            <person name="Sheng Y."/>
            <person name="Shibata Y."/>
            <person name="Shimada H."/>
            <person name="Shimada K."/>
            <person name="Silva D."/>
            <person name="Sinclair B."/>
            <person name="Sperling S."/>
            <person name="Stupka E."/>
            <person name="Sugiura K."/>
            <person name="Sultana R."/>
            <person name="Takenaka Y."/>
            <person name="Taki K."/>
            <person name="Tammoja K."/>
            <person name="Tan S.L."/>
            <person name="Tang S."/>
            <person name="Taylor M.S."/>
            <person name="Tegner J."/>
            <person name="Teichmann S.A."/>
            <person name="Ueda H.R."/>
            <person name="van Nimwegen E."/>
            <person name="Verardo R."/>
            <person name="Wei C.L."/>
            <person name="Yagi K."/>
            <person name="Yamanishi H."/>
            <person name="Zabarovsky E."/>
            <person name="Zhu S."/>
            <person name="Zimmer A."/>
            <person name="Hide W."/>
            <person name="Bult C."/>
            <person name="Grimmond S.M."/>
            <person name="Teasdale R.D."/>
            <person name="Liu E.T."/>
            <person name="Brusic V."/>
            <person name="Quackenbush J."/>
            <person name="Wahlestedt C."/>
            <person name="Mattick J.S."/>
            <person name="Hume D.A."/>
            <person name="Kai C."/>
            <person name="Sasaki D."/>
            <person name="Tomaru Y."/>
            <person name="Fukuda S."/>
            <person name="Kanamori-Katayama M."/>
            <person name="Suzuki M."/>
            <person name="Aoki J."/>
            <person name="Arakawa T."/>
            <person name="Iida J."/>
            <person name="Imamura K."/>
            <person name="Itoh M."/>
            <person name="Kato T."/>
            <person name="Kawaji H."/>
            <person name="Kawagashira N."/>
            <person name="Kawashima T."/>
            <person name="Kojima M."/>
            <person name="Kondo S."/>
            <person name="Konno H."/>
            <person name="Nakano K."/>
            <person name="Ninomiya N."/>
            <person name="Nishio T."/>
            <person name="Okada M."/>
            <person name="Plessy C."/>
            <person name="Shibata K."/>
            <person name="Shiraki T."/>
            <person name="Suzuki S."/>
            <person name="Tagami M."/>
            <person name="Waki K."/>
            <person name="Watahiki A."/>
            <person name="Okamura-Oho Y."/>
            <person name="Suzuki H."/>
            <person name="Kawai J."/>
            <person name="Hayashizaki Y."/>
        </authorList>
    </citation>
    <scope>NUCLEOTIDE SEQUENCE [LARGE SCALE MRNA]</scope>
    <source>
        <strain evidence="10">C57BL/6J</strain>
        <tissue evidence="10">Hypothalamus</tissue>
        <tissue evidence="11">Thymus</tissue>
    </source>
</reference>
<reference key="3">
    <citation type="journal article" date="2009" name="PLoS Biol.">
        <title>Lineage-specific biology revealed by a finished genome assembly of the mouse.</title>
        <authorList>
            <person name="Church D.M."/>
            <person name="Goodstadt L."/>
            <person name="Hillier L.W."/>
            <person name="Zody M.C."/>
            <person name="Goldstein S."/>
            <person name="She X."/>
            <person name="Bult C.J."/>
            <person name="Agarwala R."/>
            <person name="Cherry J.L."/>
            <person name="DiCuccio M."/>
            <person name="Hlavina W."/>
            <person name="Kapustin Y."/>
            <person name="Meric P."/>
            <person name="Maglott D."/>
            <person name="Birtle Z."/>
            <person name="Marques A.C."/>
            <person name="Graves T."/>
            <person name="Zhou S."/>
            <person name="Teague B."/>
            <person name="Potamousis K."/>
            <person name="Churas C."/>
            <person name="Place M."/>
            <person name="Herschleb J."/>
            <person name="Runnheim R."/>
            <person name="Forrest D."/>
            <person name="Amos-Landgraf J."/>
            <person name="Schwartz D.C."/>
            <person name="Cheng Z."/>
            <person name="Lindblad-Toh K."/>
            <person name="Eichler E.E."/>
            <person name="Ponting C.P."/>
        </authorList>
    </citation>
    <scope>NUCLEOTIDE SEQUENCE [LARGE SCALE GENOMIC DNA]</scope>
    <source>
        <strain>C57BL/6J</strain>
    </source>
</reference>
<reference evidence="8" key="4">
    <citation type="journal article" date="2004" name="Genome Res.">
        <title>The status, quality, and expansion of the NIH full-length cDNA project: the Mammalian Gene Collection (MGC).</title>
        <authorList>
            <consortium name="The MGC Project Team"/>
        </authorList>
    </citation>
    <scope>NUCLEOTIDE SEQUENCE [LARGE SCALE MRNA]</scope>
    <source>
        <strain evidence="8">C57BL/6J</strain>
        <tissue evidence="8">Brain</tissue>
    </source>
</reference>
<reference evidence="7" key="5">
    <citation type="journal article" date="2002" name="Neurosci. Res.">
        <title>Developmentally regulated expression of Neuro-p24 and its possible function in neurite extension.</title>
        <authorList>
            <person name="Araki M."/>
            <person name="Nagata K."/>
            <person name="Satoh Y."/>
            <person name="Kadota Y."/>
            <person name="Hisha H."/>
            <person name="Adachi Y."/>
            <person name="Taketani S."/>
        </authorList>
    </citation>
    <scope>FUNCTION</scope>
    <scope>DEVELOPMENTAL STAGE</scope>
</reference>
<reference evidence="7" key="6">
    <citation type="journal article" date="2006" name="Brain Res.">
        <title>Molecular characterization of a transport vesicle protein Neurensin-2, a homologue of Neurensin-1, expressed in neural cells.</title>
        <authorList>
            <person name="Nakanishi K."/>
            <person name="Ida M."/>
            <person name="Suzuki H."/>
            <person name="Kitano C."/>
            <person name="Yamamoto A."/>
            <person name="Mori N."/>
            <person name="Araki M."/>
            <person name="Taketani S."/>
        </authorList>
    </citation>
    <scope>FUNCTION</scope>
    <scope>SUBCELLULAR LOCATION</scope>
    <scope>INDUCTION</scope>
</reference>
<reference evidence="7" key="7">
    <citation type="journal article" date="2006" name="Brain Res.">
        <title>Neurensin-1 expression in the mouse retina during postnatal development and in the cultured retinal neurons.</title>
        <authorList>
            <person name="Nagata K."/>
            <person name="Suzuki H."/>
            <person name="Niiya-Kato A."/>
            <person name="Kinoshita S."/>
            <person name="Taketani S."/>
            <person name="Araki M."/>
        </authorList>
    </citation>
    <scope>FUNCTION</scope>
    <scope>DEVELOPMENTAL STAGE</scope>
</reference>
<reference key="8">
    <citation type="journal article" date="2010" name="Cell">
        <title>A tissue-specific atlas of mouse protein phosphorylation and expression.</title>
        <authorList>
            <person name="Huttlin E.L."/>
            <person name="Jedrychowski M.P."/>
            <person name="Elias J.E."/>
            <person name="Goswami T."/>
            <person name="Rad R."/>
            <person name="Beausoleil S.A."/>
            <person name="Villen J."/>
            <person name="Haas W."/>
            <person name="Sowa M.E."/>
            <person name="Gygi S.P."/>
        </authorList>
    </citation>
    <scope>IDENTIFICATION BY MASS SPECTROMETRY [LARGE SCALE ANALYSIS]</scope>
    <source>
        <tissue>Brain</tissue>
    </source>
</reference>
<reference key="9">
    <citation type="journal article" date="2015" name="Science">
        <title>Multiple repressive mechanisms in the hippocampus during memory formation.</title>
        <authorList>
            <person name="Cho J."/>
            <person name="Yu N.K."/>
            <person name="Choi J.H."/>
            <person name="Sim S.E."/>
            <person name="Kang S.J."/>
            <person name="Kwak C."/>
            <person name="Lee S.W."/>
            <person name="Kim J.I."/>
            <person name="Choi D.I."/>
            <person name="Kim V.N."/>
            <person name="Kaang B.K."/>
        </authorList>
    </citation>
    <scope>FUNCTION</scope>
    <scope>INDUCTION</scope>
</reference>
<dbReference type="EMBL" id="D83206">
    <property type="protein sequence ID" value="BAA18947.1"/>
    <property type="molecule type" value="mRNA"/>
</dbReference>
<dbReference type="EMBL" id="AK138191">
    <property type="protein sequence ID" value="BAE23574.1"/>
    <property type="molecule type" value="mRNA"/>
</dbReference>
<dbReference type="EMBL" id="AK153741">
    <property type="protein sequence ID" value="BAE32162.1"/>
    <property type="molecule type" value="mRNA"/>
</dbReference>
<dbReference type="EMBL" id="AL589766">
    <property type="protein sequence ID" value="CAI24436.1"/>
    <property type="molecule type" value="Genomic_DNA"/>
</dbReference>
<dbReference type="EMBL" id="BC052019">
    <property type="protein sequence ID" value="AAH52019.1"/>
    <property type="molecule type" value="mRNA"/>
</dbReference>
<dbReference type="CCDS" id="CCDS26387.1"/>
<dbReference type="RefSeq" id="NP_001413530.1">
    <property type="nucleotide sequence ID" value="NM_001426601.1"/>
</dbReference>
<dbReference type="RefSeq" id="NP_001413531.1">
    <property type="nucleotide sequence ID" value="NM_001426602.1"/>
</dbReference>
<dbReference type="RefSeq" id="NP_001413532.1">
    <property type="nucleotide sequence ID" value="NM_001426603.1"/>
</dbReference>
<dbReference type="RefSeq" id="NP_001413533.1">
    <property type="nucleotide sequence ID" value="NM_001426604.1"/>
</dbReference>
<dbReference type="RefSeq" id="NP_033539.1">
    <property type="nucleotide sequence ID" value="NM_009513.2"/>
</dbReference>
<dbReference type="RefSeq" id="XP_011242608.1">
    <property type="nucleotide sequence ID" value="XM_011244306.2"/>
</dbReference>
<dbReference type="RefSeq" id="XP_017170992.1">
    <property type="nucleotide sequence ID" value="XM_017315503.2"/>
</dbReference>
<dbReference type="CORUM" id="P97799"/>
<dbReference type="FunCoup" id="P97799">
    <property type="interactions" value="371"/>
</dbReference>
<dbReference type="STRING" id="10090.ENSMUSP00000055048"/>
<dbReference type="GlyGen" id="P97799">
    <property type="glycosylation" value="2 sites, 1 O-linked glycan (2 sites)"/>
</dbReference>
<dbReference type="iPTMnet" id="P97799"/>
<dbReference type="PhosphoSitePlus" id="P97799"/>
<dbReference type="PaxDb" id="10090-ENSMUSP00000055048"/>
<dbReference type="ProteomicsDB" id="293973"/>
<dbReference type="Antibodypedia" id="58910">
    <property type="antibodies" value="96 antibodies from 20 providers"/>
</dbReference>
<dbReference type="Ensembl" id="ENSMUST00000057866.13">
    <property type="protein sequence ID" value="ENSMUSP00000055048.7"/>
    <property type="gene ID" value="ENSMUSG00000048978.15"/>
</dbReference>
<dbReference type="Ensembl" id="ENSMUST00000167305.2">
    <property type="protein sequence ID" value="ENSMUSP00000128979.2"/>
    <property type="gene ID" value="ENSMUSG00000048978.15"/>
</dbReference>
<dbReference type="GeneID" id="22360"/>
<dbReference type="KEGG" id="mmu:22360"/>
<dbReference type="UCSC" id="uc007pwx.2">
    <property type="organism name" value="mouse"/>
</dbReference>
<dbReference type="AGR" id="MGI:894662"/>
<dbReference type="CTD" id="140767"/>
<dbReference type="MGI" id="MGI:894662">
    <property type="gene designation" value="Nrsn1"/>
</dbReference>
<dbReference type="VEuPathDB" id="HostDB:ENSMUSG00000048978"/>
<dbReference type="eggNOG" id="ENOG502QRNK">
    <property type="taxonomic scope" value="Eukaryota"/>
</dbReference>
<dbReference type="GeneTree" id="ENSGT00530000063877"/>
<dbReference type="HOGENOM" id="CLU_118170_1_0_1"/>
<dbReference type="InParanoid" id="P97799"/>
<dbReference type="OMA" id="ASIWEHE"/>
<dbReference type="OrthoDB" id="5979667at2759"/>
<dbReference type="PhylomeDB" id="P97799"/>
<dbReference type="TreeFam" id="TF332090"/>
<dbReference type="BioGRID-ORCS" id="22360">
    <property type="hits" value="0 hits in 77 CRISPR screens"/>
</dbReference>
<dbReference type="PRO" id="PR:P97799"/>
<dbReference type="Proteomes" id="UP000000589">
    <property type="component" value="Chromosome 13"/>
</dbReference>
<dbReference type="RNAct" id="P97799">
    <property type="molecule type" value="protein"/>
</dbReference>
<dbReference type="Bgee" id="ENSMUSG00000048978">
    <property type="expression patterns" value="Expressed in primary visual cortex and 134 other cell types or tissues"/>
</dbReference>
<dbReference type="GO" id="GO:0031410">
    <property type="term" value="C:cytoplasmic vesicle"/>
    <property type="evidence" value="ECO:0000314"/>
    <property type="project" value="MGI"/>
</dbReference>
<dbReference type="GO" id="GO:0030426">
    <property type="term" value="C:growth cone"/>
    <property type="evidence" value="ECO:0000314"/>
    <property type="project" value="MGI"/>
</dbReference>
<dbReference type="GO" id="GO:0016020">
    <property type="term" value="C:membrane"/>
    <property type="evidence" value="ECO:0007669"/>
    <property type="project" value="UniProtKB-SubCell"/>
</dbReference>
<dbReference type="GO" id="GO:0043005">
    <property type="term" value="C:neuron projection"/>
    <property type="evidence" value="ECO:0000314"/>
    <property type="project" value="UniProtKB"/>
</dbReference>
<dbReference type="GO" id="GO:0043025">
    <property type="term" value="C:neuronal cell body"/>
    <property type="evidence" value="ECO:0000314"/>
    <property type="project" value="MGI"/>
</dbReference>
<dbReference type="GO" id="GO:0030133">
    <property type="term" value="C:transport vesicle"/>
    <property type="evidence" value="ECO:0007669"/>
    <property type="project" value="InterPro"/>
</dbReference>
<dbReference type="GO" id="GO:0007399">
    <property type="term" value="P:nervous system development"/>
    <property type="evidence" value="ECO:0000270"/>
    <property type="project" value="UniProtKB"/>
</dbReference>
<dbReference type="InterPro" id="IPR024883">
    <property type="entry name" value="Neurensin"/>
</dbReference>
<dbReference type="PANTHER" id="PTHR14796">
    <property type="entry name" value="NEURENSIN 1-RELATED"/>
    <property type="match status" value="1"/>
</dbReference>
<dbReference type="PANTHER" id="PTHR14796:SF6">
    <property type="entry name" value="NEURENSIN-1"/>
    <property type="match status" value="1"/>
</dbReference>
<dbReference type="Pfam" id="PF14927">
    <property type="entry name" value="Neurensin"/>
    <property type="match status" value="1"/>
</dbReference>
<gene>
    <name evidence="12" type="primary">Nrsn1</name>
    <name evidence="12" type="synonym">Vmp</name>
</gene>
<feature type="chain" id="PRO_0000270584" description="Neurensin-1">
    <location>
        <begin position="1"/>
        <end position="196"/>
    </location>
</feature>
<feature type="transmembrane region" description="Helical" evidence="1">
    <location>
        <begin position="67"/>
        <end position="87"/>
    </location>
</feature>
<feature type="transmembrane region" description="Helical" evidence="1">
    <location>
        <begin position="121"/>
        <end position="141"/>
    </location>
</feature>
<accession>P97799</accession>
<sequence length="196" mass="21595">MTSCSNTCGSRRAQADTEGGYQQRYGVRSYLHQFYEDCTASIWEYEDDFQIQRSPNRWSSVFWKVGLISGTVFVILGLTVLAVGFLVPPKIEAFGEADFMVVDTHAVKYNGALDTCKLAGAVLFCIGGTSMAGCLLMSVFAKSYSKEEKFLQQKFKERIADIKAHTQPITKAPGPGDTKIPVTLSRVQNVQPLSAT</sequence>